<evidence type="ECO:0000250" key="1"/>
<evidence type="ECO:0000305" key="2"/>
<comment type="function">
    <text evidence="1">Binds directly to 23S ribosomal RNA and is necessary for the in vitro assembly process of the 50S ribosomal subunit. It is not involved in the protein synthesizing functions of that subunit (By similarity).</text>
</comment>
<comment type="similarity">
    <text evidence="2">Belongs to the bacterial ribosomal protein bL20 family.</text>
</comment>
<feature type="chain" id="PRO_0000355479" description="Large ribosomal subunit protein bL20">
    <location>
        <begin position="1"/>
        <end position="222"/>
    </location>
</feature>
<name>RL20_PAEAT</name>
<gene>
    <name type="primary">rplT</name>
    <name type="ordered locus">AAur_1614</name>
</gene>
<organism>
    <name type="scientific">Paenarthrobacter aurescens (strain TC1)</name>
    <dbReference type="NCBI Taxonomy" id="290340"/>
    <lineage>
        <taxon>Bacteria</taxon>
        <taxon>Bacillati</taxon>
        <taxon>Actinomycetota</taxon>
        <taxon>Actinomycetes</taxon>
        <taxon>Micrococcales</taxon>
        <taxon>Micrococcaceae</taxon>
        <taxon>Paenarthrobacter</taxon>
    </lineage>
</organism>
<sequence length="222" mass="23926">MARVKRAVNAHKKRRVVLERAKGYRGQRSRLYRKAKEQLLHSFVYSYGDRRKKKGDFRRLWIQRINAASRANGLTYNRLIQGLKAAEVEVDRRMLAELAVSDANAFAALVNIAKAALPADTSAPAAAAAPKAAKVAPAAATATAVKAVVSEKPAIDGAVAADGDEAPEGYAIKGNAESKKYHVPGSTWYNTTAAEYWFSTVEAAKAAGFEPAGGEARQQIKN</sequence>
<reference key="1">
    <citation type="journal article" date="2006" name="PLoS Genet.">
        <title>Secrets of soil survival revealed by the genome sequence of Arthrobacter aurescens TC1.</title>
        <authorList>
            <person name="Mongodin E.F."/>
            <person name="Shapir N."/>
            <person name="Daugherty S.C."/>
            <person name="DeBoy R.T."/>
            <person name="Emerson J.B."/>
            <person name="Shvartzbeyn A."/>
            <person name="Radune D."/>
            <person name="Vamathevan J."/>
            <person name="Riggs F."/>
            <person name="Grinberg V."/>
            <person name="Khouri H.M."/>
            <person name="Wackett L.P."/>
            <person name="Nelson K.E."/>
            <person name="Sadowsky M.J."/>
        </authorList>
    </citation>
    <scope>NUCLEOTIDE SEQUENCE [LARGE SCALE GENOMIC DNA]</scope>
    <source>
        <strain>TC1</strain>
    </source>
</reference>
<proteinExistence type="inferred from homology"/>
<protein>
    <recommendedName>
        <fullName evidence="2">Large ribosomal subunit protein bL20</fullName>
    </recommendedName>
    <alternativeName>
        <fullName>50S ribosomal protein L20</fullName>
    </alternativeName>
</protein>
<keyword id="KW-0687">Ribonucleoprotein</keyword>
<keyword id="KW-0689">Ribosomal protein</keyword>
<keyword id="KW-0694">RNA-binding</keyword>
<keyword id="KW-0699">rRNA-binding</keyword>
<dbReference type="EMBL" id="CP000474">
    <property type="protein sequence ID" value="ABM10016.1"/>
    <property type="molecule type" value="Genomic_DNA"/>
</dbReference>
<dbReference type="RefSeq" id="WP_011774325.1">
    <property type="nucleotide sequence ID" value="NC_008711.1"/>
</dbReference>
<dbReference type="SMR" id="A1R568"/>
<dbReference type="STRING" id="290340.AAur_1614"/>
<dbReference type="KEGG" id="aau:AAur_1614"/>
<dbReference type="eggNOG" id="COG0292">
    <property type="taxonomic scope" value="Bacteria"/>
</dbReference>
<dbReference type="HOGENOM" id="CLU_074407_0_0_11"/>
<dbReference type="OrthoDB" id="9808966at2"/>
<dbReference type="Proteomes" id="UP000000637">
    <property type="component" value="Chromosome"/>
</dbReference>
<dbReference type="GO" id="GO:1990904">
    <property type="term" value="C:ribonucleoprotein complex"/>
    <property type="evidence" value="ECO:0007669"/>
    <property type="project" value="UniProtKB-KW"/>
</dbReference>
<dbReference type="GO" id="GO:0005840">
    <property type="term" value="C:ribosome"/>
    <property type="evidence" value="ECO:0007669"/>
    <property type="project" value="UniProtKB-KW"/>
</dbReference>
<dbReference type="GO" id="GO:0019843">
    <property type="term" value="F:rRNA binding"/>
    <property type="evidence" value="ECO:0007669"/>
    <property type="project" value="UniProtKB-UniRule"/>
</dbReference>
<dbReference type="GO" id="GO:0003735">
    <property type="term" value="F:structural constituent of ribosome"/>
    <property type="evidence" value="ECO:0007669"/>
    <property type="project" value="InterPro"/>
</dbReference>
<dbReference type="GO" id="GO:0000027">
    <property type="term" value="P:ribosomal large subunit assembly"/>
    <property type="evidence" value="ECO:0007669"/>
    <property type="project" value="UniProtKB-UniRule"/>
</dbReference>
<dbReference type="GO" id="GO:0006412">
    <property type="term" value="P:translation"/>
    <property type="evidence" value="ECO:0007669"/>
    <property type="project" value="InterPro"/>
</dbReference>
<dbReference type="CDD" id="cd07026">
    <property type="entry name" value="Ribosomal_L20"/>
    <property type="match status" value="1"/>
</dbReference>
<dbReference type="FunFam" id="1.10.1900.20:FF:000001">
    <property type="entry name" value="50S ribosomal protein L20"/>
    <property type="match status" value="1"/>
</dbReference>
<dbReference type="Gene3D" id="6.10.160.10">
    <property type="match status" value="1"/>
</dbReference>
<dbReference type="Gene3D" id="1.10.1900.20">
    <property type="entry name" value="Ribosomal protein L20"/>
    <property type="match status" value="1"/>
</dbReference>
<dbReference type="HAMAP" id="MF_00382">
    <property type="entry name" value="Ribosomal_bL20"/>
    <property type="match status" value="1"/>
</dbReference>
<dbReference type="InterPro" id="IPR005813">
    <property type="entry name" value="Ribosomal_bL20"/>
</dbReference>
<dbReference type="InterPro" id="IPR049946">
    <property type="entry name" value="RIBOSOMAL_L20_CS"/>
</dbReference>
<dbReference type="InterPro" id="IPR035566">
    <property type="entry name" value="Ribosomal_protein_bL20_C"/>
</dbReference>
<dbReference type="NCBIfam" id="TIGR01032">
    <property type="entry name" value="rplT_bact"/>
    <property type="match status" value="1"/>
</dbReference>
<dbReference type="PANTHER" id="PTHR10986">
    <property type="entry name" value="39S RIBOSOMAL PROTEIN L20"/>
    <property type="match status" value="1"/>
</dbReference>
<dbReference type="Pfam" id="PF00453">
    <property type="entry name" value="Ribosomal_L20"/>
    <property type="match status" value="1"/>
</dbReference>
<dbReference type="PRINTS" id="PR00062">
    <property type="entry name" value="RIBOSOMALL20"/>
</dbReference>
<dbReference type="SUPFAM" id="SSF74731">
    <property type="entry name" value="Ribosomal protein L20"/>
    <property type="match status" value="1"/>
</dbReference>
<dbReference type="PROSITE" id="PS00937">
    <property type="entry name" value="RIBOSOMAL_L20"/>
    <property type="match status" value="1"/>
</dbReference>
<accession>A1R568</accession>